<feature type="chain" id="PRO_0000300149" description="Cytochrome b6-f complex subunit 6">
    <location>
        <begin position="1"/>
        <end position="31"/>
    </location>
</feature>
<feature type="transmembrane region" description="Helical" evidence="1">
    <location>
        <begin position="4"/>
        <end position="24"/>
    </location>
</feature>
<evidence type="ECO:0000255" key="1">
    <source>
        <dbReference type="HAMAP-Rule" id="MF_00433"/>
    </source>
</evidence>
<keyword id="KW-0150">Chloroplast</keyword>
<keyword id="KW-0249">Electron transport</keyword>
<keyword id="KW-0472">Membrane</keyword>
<keyword id="KW-0602">Photosynthesis</keyword>
<keyword id="KW-0934">Plastid</keyword>
<keyword id="KW-0793">Thylakoid</keyword>
<keyword id="KW-0812">Transmembrane</keyword>
<keyword id="KW-1133">Transmembrane helix</keyword>
<keyword id="KW-0813">Transport</keyword>
<reference key="1">
    <citation type="submission" date="2007-03" db="EMBL/GenBank/DDBJ databases">
        <title>Sequencing analysis of Nasturtium officinale chloroplast DNA.</title>
        <authorList>
            <person name="Hosouchi T."/>
            <person name="Tsuruoka H."/>
            <person name="Kotani H."/>
        </authorList>
    </citation>
    <scope>NUCLEOTIDE SEQUENCE [LARGE SCALE GENOMIC DNA]</scope>
</reference>
<comment type="function">
    <text evidence="1">Component of the cytochrome b6-f complex, which mediates electron transfer between photosystem II (PSII) and photosystem I (PSI), cyclic electron flow around PSI, and state transitions. PetL is important for photoautotrophic growth as well as for electron transfer efficiency and stability of the cytochrome b6-f complex.</text>
</comment>
<comment type="subunit">
    <text evidence="1">The 4 large subunits of the cytochrome b6-f complex are cytochrome b6, subunit IV (17 kDa polypeptide, PetD), cytochrome f and the Rieske protein, while the 4 small subunits are PetG, PetL, PetM and PetN. The complex functions as a dimer.</text>
</comment>
<comment type="subcellular location">
    <subcellularLocation>
        <location evidence="1">Plastid</location>
        <location evidence="1">Chloroplast thylakoid membrane</location>
        <topology evidence="1">Single-pass membrane protein</topology>
    </subcellularLocation>
</comment>
<comment type="similarity">
    <text evidence="1">Belongs to the PetL family.</text>
</comment>
<dbReference type="EMBL" id="AP009376">
    <property type="protein sequence ID" value="BAF50656.1"/>
    <property type="molecule type" value="Genomic_DNA"/>
</dbReference>
<dbReference type="RefSeq" id="YP_001123832.1">
    <property type="nucleotide sequence ID" value="NC_009275.1"/>
</dbReference>
<dbReference type="SMR" id="A4QLV1"/>
<dbReference type="GeneID" id="4962162"/>
<dbReference type="GO" id="GO:0009535">
    <property type="term" value="C:chloroplast thylakoid membrane"/>
    <property type="evidence" value="ECO:0007669"/>
    <property type="project" value="UniProtKB-SubCell"/>
</dbReference>
<dbReference type="GO" id="GO:0009512">
    <property type="term" value="C:cytochrome b6f complex"/>
    <property type="evidence" value="ECO:0007669"/>
    <property type="project" value="InterPro"/>
</dbReference>
<dbReference type="GO" id="GO:0045158">
    <property type="term" value="F:electron transporter, transferring electrons within cytochrome b6/f complex of photosystem II activity"/>
    <property type="evidence" value="ECO:0007669"/>
    <property type="project" value="UniProtKB-UniRule"/>
</dbReference>
<dbReference type="GO" id="GO:0015979">
    <property type="term" value="P:photosynthesis"/>
    <property type="evidence" value="ECO:0007669"/>
    <property type="project" value="UniProtKB-KW"/>
</dbReference>
<dbReference type="HAMAP" id="MF_00433">
    <property type="entry name" value="Cytb6_f_PetL"/>
    <property type="match status" value="1"/>
</dbReference>
<dbReference type="InterPro" id="IPR007802">
    <property type="entry name" value="Cyt_b6/f_cplx_su6"/>
</dbReference>
<dbReference type="PANTHER" id="PTHR37266">
    <property type="entry name" value="CYTOCHROME B6-F COMPLEX SUBUNIT 6"/>
    <property type="match status" value="1"/>
</dbReference>
<dbReference type="PANTHER" id="PTHR37266:SF1">
    <property type="entry name" value="CYTOCHROME B6-F COMPLEX SUBUNIT 6"/>
    <property type="match status" value="1"/>
</dbReference>
<dbReference type="Pfam" id="PF05115">
    <property type="entry name" value="PetL"/>
    <property type="match status" value="1"/>
</dbReference>
<geneLocation type="chloroplast"/>
<accession>A4QLV1</accession>
<organism>
    <name type="scientific">Nasturtium officinale</name>
    <name type="common">Watercress</name>
    <name type="synonym">Rorippa nasturtium-aquaticum</name>
    <dbReference type="NCBI Taxonomy" id="65948"/>
    <lineage>
        <taxon>Eukaryota</taxon>
        <taxon>Viridiplantae</taxon>
        <taxon>Streptophyta</taxon>
        <taxon>Embryophyta</taxon>
        <taxon>Tracheophyta</taxon>
        <taxon>Spermatophyta</taxon>
        <taxon>Magnoliopsida</taxon>
        <taxon>eudicotyledons</taxon>
        <taxon>Gunneridae</taxon>
        <taxon>Pentapetalae</taxon>
        <taxon>rosids</taxon>
        <taxon>malvids</taxon>
        <taxon>Brassicales</taxon>
        <taxon>Brassicaceae</taxon>
        <taxon>Cardamineae</taxon>
        <taxon>Nasturtium</taxon>
    </lineage>
</organism>
<name>PETL_NASOF</name>
<sequence length="31" mass="3401">MPTITSYFGFLLAALTITSVLFIGLSKIRLI</sequence>
<proteinExistence type="inferred from homology"/>
<gene>
    <name evidence="1" type="primary">petL</name>
</gene>
<protein>
    <recommendedName>
        <fullName evidence="1">Cytochrome b6-f complex subunit 6</fullName>
    </recommendedName>
    <alternativeName>
        <fullName evidence="1">Cytochrome b6-f complex subunit PetL</fullName>
    </alternativeName>
    <alternativeName>
        <fullName evidence="1">Cytochrome b6-f complex subunit VI</fullName>
    </alternativeName>
</protein>